<organism>
    <name type="scientific">Arabidopsis thaliana</name>
    <name type="common">Mouse-ear cress</name>
    <dbReference type="NCBI Taxonomy" id="3702"/>
    <lineage>
        <taxon>Eukaryota</taxon>
        <taxon>Viridiplantae</taxon>
        <taxon>Streptophyta</taxon>
        <taxon>Embryophyta</taxon>
        <taxon>Tracheophyta</taxon>
        <taxon>Spermatophyta</taxon>
        <taxon>Magnoliopsida</taxon>
        <taxon>eudicotyledons</taxon>
        <taxon>Gunneridae</taxon>
        <taxon>Pentapetalae</taxon>
        <taxon>rosids</taxon>
        <taxon>malvids</taxon>
        <taxon>Brassicales</taxon>
        <taxon>Brassicaceae</taxon>
        <taxon>Camelineae</taxon>
        <taxon>Arabidopsis</taxon>
    </lineage>
</organism>
<proteinExistence type="evidence at transcript level"/>
<dbReference type="EMBL" id="AL132980">
    <property type="protein sequence ID" value="CAB62639.1"/>
    <property type="status" value="ALT_SEQ"/>
    <property type="molecule type" value="Genomic_DNA"/>
</dbReference>
<dbReference type="EMBL" id="CP002686">
    <property type="protein sequence ID" value="AEE78759.1"/>
    <property type="molecule type" value="Genomic_DNA"/>
</dbReference>
<dbReference type="EMBL" id="DQ487548">
    <property type="protein sequence ID" value="ABF59357.1"/>
    <property type="molecule type" value="Genomic_DNA"/>
</dbReference>
<dbReference type="EMBL" id="EF182876">
    <property type="status" value="NOT_ANNOTATED_CDS"/>
    <property type="molecule type" value="mRNA"/>
</dbReference>
<dbReference type="PIR" id="T45748">
    <property type="entry name" value="T45748"/>
</dbReference>
<dbReference type="RefSeq" id="NP_001030837.1">
    <property type="nucleotide sequence ID" value="NM_001035760.2"/>
</dbReference>
<dbReference type="PaxDb" id="3702-AT3G51171.1"/>
<dbReference type="EnsemblPlants" id="AT3G51171.1">
    <property type="protein sequence ID" value="AT3G51171.1"/>
    <property type="gene ID" value="AT3G51171"/>
</dbReference>
<dbReference type="GeneID" id="3769705"/>
<dbReference type="Gramene" id="AT3G51171.1">
    <property type="protein sequence ID" value="AT3G51171.1"/>
    <property type="gene ID" value="AT3G51171"/>
</dbReference>
<dbReference type="KEGG" id="ath:AT3G51171"/>
<dbReference type="Araport" id="AT3G51171"/>
<dbReference type="TAIR" id="AT3G51171"/>
<dbReference type="HOGENOM" id="CLU_034692_2_1_1"/>
<dbReference type="InParanoid" id="Q1G3N6"/>
<dbReference type="OMA" id="LKQVKWI"/>
<dbReference type="PhylomeDB" id="Q1G3N6"/>
<dbReference type="PRO" id="PR:Q1G3N6"/>
<dbReference type="Proteomes" id="UP000006548">
    <property type="component" value="Chromosome 3"/>
</dbReference>
<dbReference type="ExpressionAtlas" id="Q1G3N6">
    <property type="expression patterns" value="baseline"/>
</dbReference>
<dbReference type="CDD" id="cd22157">
    <property type="entry name" value="F-box_AtFBW1-like"/>
    <property type="match status" value="1"/>
</dbReference>
<dbReference type="Gene3D" id="1.20.1280.50">
    <property type="match status" value="1"/>
</dbReference>
<dbReference type="InterPro" id="IPR006527">
    <property type="entry name" value="F-box-assoc_dom_typ1"/>
</dbReference>
<dbReference type="InterPro" id="IPR017451">
    <property type="entry name" value="F-box-assoc_interact_dom"/>
</dbReference>
<dbReference type="InterPro" id="IPR036047">
    <property type="entry name" value="F-box-like_dom_sf"/>
</dbReference>
<dbReference type="InterPro" id="IPR001810">
    <property type="entry name" value="F-box_dom"/>
</dbReference>
<dbReference type="InterPro" id="IPR050796">
    <property type="entry name" value="SCF_F-box_component"/>
</dbReference>
<dbReference type="NCBIfam" id="TIGR01640">
    <property type="entry name" value="F_box_assoc_1"/>
    <property type="match status" value="1"/>
</dbReference>
<dbReference type="PANTHER" id="PTHR31672">
    <property type="entry name" value="BNACNNG10540D PROTEIN"/>
    <property type="match status" value="1"/>
</dbReference>
<dbReference type="PANTHER" id="PTHR31672:SF13">
    <property type="entry name" value="F-BOX PROTEIN CPR30-LIKE"/>
    <property type="match status" value="1"/>
</dbReference>
<dbReference type="Pfam" id="PF00646">
    <property type="entry name" value="F-box"/>
    <property type="match status" value="1"/>
</dbReference>
<dbReference type="Pfam" id="PF07734">
    <property type="entry name" value="FBA_1"/>
    <property type="match status" value="1"/>
</dbReference>
<dbReference type="SMART" id="SM00256">
    <property type="entry name" value="FBOX"/>
    <property type="match status" value="1"/>
</dbReference>
<dbReference type="SUPFAM" id="SSF81383">
    <property type="entry name" value="F-box domain"/>
    <property type="match status" value="1"/>
</dbReference>
<dbReference type="PROSITE" id="PS50181">
    <property type="entry name" value="FBOX"/>
    <property type="match status" value="1"/>
</dbReference>
<sequence length="256" mass="29921">MVPLPWELEEDILSRLAAQSLVRFRSVCKRWNYLFDEKSFIKNHFARACPQFIFMTDSNIYSIEIIGLDGVDPTIKLRVLDSSGIPYRDWKFAYITITACDGFLFCNSWASPKGTAFWNPWLKQVKWIEYEDKGFNVCGLGYDNTRDGKVYKILGYLMCRPEDGSSYVYHQRVAIYDCASHAFKFIEISNKDWFLTDVTRFSVSLNGNLYWLSPIPNTDDFLIQCFDFSREICKPFCLLPCRKFDAFDLLVSFQGR</sequence>
<protein>
    <recommendedName>
        <fullName>Putative F-box protein At3g51171</fullName>
    </recommendedName>
</protein>
<keyword id="KW-1185">Reference proteome</keyword>
<evidence type="ECO:0000255" key="1">
    <source>
        <dbReference type="PROSITE-ProRule" id="PRU00080"/>
    </source>
</evidence>
<evidence type="ECO:0000305" key="2"/>
<reference key="1">
    <citation type="journal article" date="2000" name="Nature">
        <title>Sequence and analysis of chromosome 3 of the plant Arabidopsis thaliana.</title>
        <authorList>
            <person name="Salanoubat M."/>
            <person name="Lemcke K."/>
            <person name="Rieger M."/>
            <person name="Ansorge W."/>
            <person name="Unseld M."/>
            <person name="Fartmann B."/>
            <person name="Valle G."/>
            <person name="Bloecker H."/>
            <person name="Perez-Alonso M."/>
            <person name="Obermaier B."/>
            <person name="Delseny M."/>
            <person name="Boutry M."/>
            <person name="Grivell L.A."/>
            <person name="Mache R."/>
            <person name="Puigdomenech P."/>
            <person name="De Simone V."/>
            <person name="Choisne N."/>
            <person name="Artiguenave F."/>
            <person name="Robert C."/>
            <person name="Brottier P."/>
            <person name="Wincker P."/>
            <person name="Cattolico L."/>
            <person name="Weissenbach J."/>
            <person name="Saurin W."/>
            <person name="Quetier F."/>
            <person name="Schaefer M."/>
            <person name="Mueller-Auer S."/>
            <person name="Gabel C."/>
            <person name="Fuchs M."/>
            <person name="Benes V."/>
            <person name="Wurmbach E."/>
            <person name="Drzonek H."/>
            <person name="Erfle H."/>
            <person name="Jordan N."/>
            <person name="Bangert S."/>
            <person name="Wiedelmann R."/>
            <person name="Kranz H."/>
            <person name="Voss H."/>
            <person name="Holland R."/>
            <person name="Brandt P."/>
            <person name="Nyakatura G."/>
            <person name="Vezzi A."/>
            <person name="D'Angelo M."/>
            <person name="Pallavicini A."/>
            <person name="Toppo S."/>
            <person name="Simionati B."/>
            <person name="Conrad A."/>
            <person name="Hornischer K."/>
            <person name="Kauer G."/>
            <person name="Loehnert T.-H."/>
            <person name="Nordsiek G."/>
            <person name="Reichelt J."/>
            <person name="Scharfe M."/>
            <person name="Schoen O."/>
            <person name="Bargues M."/>
            <person name="Terol J."/>
            <person name="Climent J."/>
            <person name="Navarro P."/>
            <person name="Collado C."/>
            <person name="Perez-Perez A."/>
            <person name="Ottenwaelder B."/>
            <person name="Duchemin D."/>
            <person name="Cooke R."/>
            <person name="Laudie M."/>
            <person name="Berger-Llauro C."/>
            <person name="Purnelle B."/>
            <person name="Masuy D."/>
            <person name="de Haan M."/>
            <person name="Maarse A.C."/>
            <person name="Alcaraz J.-P."/>
            <person name="Cottet A."/>
            <person name="Casacuberta E."/>
            <person name="Monfort A."/>
            <person name="Argiriou A."/>
            <person name="Flores M."/>
            <person name="Liguori R."/>
            <person name="Vitale D."/>
            <person name="Mannhaupt G."/>
            <person name="Haase D."/>
            <person name="Schoof H."/>
            <person name="Rudd S."/>
            <person name="Zaccaria P."/>
            <person name="Mewes H.-W."/>
            <person name="Mayer K.F.X."/>
            <person name="Kaul S."/>
            <person name="Town C.D."/>
            <person name="Koo H.L."/>
            <person name="Tallon L.J."/>
            <person name="Jenkins J."/>
            <person name="Rooney T."/>
            <person name="Rizzo M."/>
            <person name="Walts A."/>
            <person name="Utterback T."/>
            <person name="Fujii C.Y."/>
            <person name="Shea T.P."/>
            <person name="Creasy T.H."/>
            <person name="Haas B."/>
            <person name="Maiti R."/>
            <person name="Wu D."/>
            <person name="Peterson J."/>
            <person name="Van Aken S."/>
            <person name="Pai G."/>
            <person name="Militscher J."/>
            <person name="Sellers P."/>
            <person name="Gill J.E."/>
            <person name="Feldblyum T.V."/>
            <person name="Preuss D."/>
            <person name="Lin X."/>
            <person name="Nierman W.C."/>
            <person name="Salzberg S.L."/>
            <person name="White O."/>
            <person name="Venter J.C."/>
            <person name="Fraser C.M."/>
            <person name="Kaneko T."/>
            <person name="Nakamura Y."/>
            <person name="Sato S."/>
            <person name="Kato T."/>
            <person name="Asamizu E."/>
            <person name="Sasamoto S."/>
            <person name="Kimura T."/>
            <person name="Idesawa K."/>
            <person name="Kawashima K."/>
            <person name="Kishida Y."/>
            <person name="Kiyokawa C."/>
            <person name="Kohara M."/>
            <person name="Matsumoto M."/>
            <person name="Matsuno A."/>
            <person name="Muraki A."/>
            <person name="Nakayama S."/>
            <person name="Nakazaki N."/>
            <person name="Shinpo S."/>
            <person name="Takeuchi C."/>
            <person name="Wada T."/>
            <person name="Watanabe A."/>
            <person name="Yamada M."/>
            <person name="Yasuda M."/>
            <person name="Tabata S."/>
        </authorList>
    </citation>
    <scope>NUCLEOTIDE SEQUENCE [LARGE SCALE GENOMIC DNA]</scope>
    <source>
        <strain>cv. Columbia</strain>
    </source>
</reference>
<reference key="2">
    <citation type="journal article" date="2017" name="Plant J.">
        <title>Araport11: a complete reannotation of the Arabidopsis thaliana reference genome.</title>
        <authorList>
            <person name="Cheng C.Y."/>
            <person name="Krishnakumar V."/>
            <person name="Chan A.P."/>
            <person name="Thibaud-Nissen F."/>
            <person name="Schobel S."/>
            <person name="Town C.D."/>
        </authorList>
    </citation>
    <scope>GENOME REANNOTATION</scope>
    <source>
        <strain>cv. Columbia</strain>
    </source>
</reference>
<reference key="3">
    <citation type="journal article" date="2006" name="Plant Biotechnol. J.">
        <title>Simultaneous high-throughput recombinational cloning of open reading frames in closed and open configurations.</title>
        <authorList>
            <person name="Underwood B.A."/>
            <person name="Vanderhaeghen R."/>
            <person name="Whitford R."/>
            <person name="Town C.D."/>
            <person name="Hilson P."/>
        </authorList>
    </citation>
    <scope>NUCLEOTIDE SEQUENCE [LARGE SCALE GENOMIC DNA]</scope>
    <source>
        <strain>cv. Columbia</strain>
    </source>
</reference>
<reference key="4">
    <citation type="journal article" date="2007" name="BMC Genomics">
        <title>Experimental validation of novel genes predicted in the un-annotated regions of the Arabidopsis genome.</title>
        <authorList>
            <person name="Moskal W.A. Jr."/>
            <person name="Wu H.C."/>
            <person name="Underwood B.A."/>
            <person name="Wang W."/>
            <person name="Town C.D."/>
            <person name="Xiao Y.-L."/>
        </authorList>
    </citation>
    <scope>NUCLEOTIDE SEQUENCE [LARGE SCALE MRNA]</scope>
    <source>
        <strain>cv. Columbia</strain>
    </source>
</reference>
<gene>
    <name type="ordered locus">At3g51171</name>
    <name type="ORF">F24M12.210</name>
</gene>
<feature type="chain" id="PRO_0000283471" description="Putative F-box protein At3g51171">
    <location>
        <begin position="1"/>
        <end position="256"/>
    </location>
</feature>
<feature type="domain" description="F-box" evidence="1">
    <location>
        <begin position="1"/>
        <end position="44"/>
    </location>
</feature>
<name>FB201_ARATH</name>
<comment type="sequence caution" evidence="2">
    <conflict type="erroneous gene model prediction">
        <sequence resource="EMBL-CDS" id="CAB62639"/>
    </conflict>
</comment>
<accession>Q1G3N6</accession>
<accession>Q9SD29</accession>